<gene>
    <name type="primary">AOG</name>
</gene>
<dbReference type="EC" id="2.4.1.263"/>
<dbReference type="EMBL" id="AB065190">
    <property type="protein sequence ID" value="BAB83692.1"/>
    <property type="molecule type" value="mRNA"/>
</dbReference>
<dbReference type="RefSeq" id="NP_001316761.1">
    <property type="nucleotide sequence ID" value="NM_001329832.1"/>
</dbReference>
<dbReference type="SMR" id="Q8W3P8"/>
<dbReference type="CAZy" id="GT1">
    <property type="family name" value="Glycosyltransferase Family 1"/>
</dbReference>
<dbReference type="GeneID" id="108341782"/>
<dbReference type="KEGG" id="ag:BAB83692"/>
<dbReference type="KEGG" id="var:108341782"/>
<dbReference type="OrthoDB" id="5835829at2759"/>
<dbReference type="BioCyc" id="MetaCyc:MONOMER-12304"/>
<dbReference type="BRENDA" id="2.4.1.263">
    <property type="organism ID" value="4737"/>
</dbReference>
<dbReference type="GO" id="GO:0010294">
    <property type="term" value="F:abscisic acid glucosyltransferase activity"/>
    <property type="evidence" value="ECO:0007669"/>
    <property type="project" value="RHEA"/>
</dbReference>
<dbReference type="CDD" id="cd03784">
    <property type="entry name" value="GT1_Gtf-like"/>
    <property type="match status" value="1"/>
</dbReference>
<dbReference type="FunFam" id="3.40.50.2000:FF:000047">
    <property type="entry name" value="Glycosyltransferase"/>
    <property type="match status" value="1"/>
</dbReference>
<dbReference type="Gene3D" id="3.40.50.2000">
    <property type="entry name" value="Glycogen Phosphorylase B"/>
    <property type="match status" value="2"/>
</dbReference>
<dbReference type="InterPro" id="IPR002213">
    <property type="entry name" value="UDP_glucos_trans"/>
</dbReference>
<dbReference type="InterPro" id="IPR035595">
    <property type="entry name" value="UDP_glycos_trans_CS"/>
</dbReference>
<dbReference type="PANTHER" id="PTHR48047">
    <property type="entry name" value="GLYCOSYLTRANSFERASE"/>
    <property type="match status" value="1"/>
</dbReference>
<dbReference type="PANTHER" id="PTHR48047:SF81">
    <property type="entry name" value="GLYCOSYLTRANSFERASE"/>
    <property type="match status" value="1"/>
</dbReference>
<dbReference type="Pfam" id="PF00201">
    <property type="entry name" value="UDPGT"/>
    <property type="match status" value="1"/>
</dbReference>
<dbReference type="SUPFAM" id="SSF53756">
    <property type="entry name" value="UDP-Glycosyltransferase/glycogen phosphorylase"/>
    <property type="match status" value="1"/>
</dbReference>
<dbReference type="PROSITE" id="PS00375">
    <property type="entry name" value="UDPGT"/>
    <property type="match status" value="1"/>
</dbReference>
<keyword id="KW-0328">Glycosyltransferase</keyword>
<keyword id="KW-0808">Transferase</keyword>
<organism>
    <name type="scientific">Phaseolus angularis</name>
    <name type="common">Azuki bean</name>
    <name type="synonym">Vigna angularis</name>
    <dbReference type="NCBI Taxonomy" id="3914"/>
    <lineage>
        <taxon>Eukaryota</taxon>
        <taxon>Viridiplantae</taxon>
        <taxon>Streptophyta</taxon>
        <taxon>Embryophyta</taxon>
        <taxon>Tracheophyta</taxon>
        <taxon>Spermatophyta</taxon>
        <taxon>Magnoliopsida</taxon>
        <taxon>eudicotyledons</taxon>
        <taxon>Gunneridae</taxon>
        <taxon>Pentapetalae</taxon>
        <taxon>rosids</taxon>
        <taxon>fabids</taxon>
        <taxon>Fabales</taxon>
        <taxon>Fabaceae</taxon>
        <taxon>Papilionoideae</taxon>
        <taxon>50 kb inversion clade</taxon>
        <taxon>NPAAA clade</taxon>
        <taxon>indigoferoid/millettioid clade</taxon>
        <taxon>Phaseoleae</taxon>
        <taxon>Vigna</taxon>
    </lineage>
</organism>
<name>AOG_PHAAN</name>
<proteinExistence type="evidence at protein level"/>
<accession>Q8W3P8</accession>
<evidence type="ECO:0000250" key="1">
    <source>
        <dbReference type="UniProtKB" id="A0A0A1HA03"/>
    </source>
</evidence>
<evidence type="ECO:0000250" key="2">
    <source>
        <dbReference type="UniProtKB" id="P51094"/>
    </source>
</evidence>
<evidence type="ECO:0000269" key="3">
    <source>
    </source>
</evidence>
<evidence type="ECO:0000305" key="4"/>
<comment type="function">
    <text evidence="3">Glucosyltransferase involved in the catabolism of abscisic acid (ABA). Adds a glucosyl group at the C-1 position of ABA; (S)-2-trans-abscisate is a better substrate than the natural (+)-S-abscisate or its enantiomer (-)-R-abscisate. No activity with (-)-phaseic acid (PA), methylated-ABA or with other hormones such as jasmonate, zeatin, auxin (IAA) or gibberellin A3 (GA3).</text>
</comment>
<comment type="catalytic activity">
    <reaction evidence="3">
        <text>2-cis-(+)-abscisate + UDP-alpha-D-glucose = beta-D-glucopyranosyl cis-(+)-abscisate + UDP</text>
        <dbReference type="Rhea" id="RHEA:31031"/>
        <dbReference type="ChEBI" id="CHEBI:22151"/>
        <dbReference type="ChEBI" id="CHEBI:37569"/>
        <dbReference type="ChEBI" id="CHEBI:58223"/>
        <dbReference type="ChEBI" id="CHEBI:58885"/>
        <dbReference type="EC" id="2.4.1.263"/>
    </reaction>
</comment>
<comment type="biophysicochemical properties">
    <phDependence>
        <text evidence="3">Optimum pH is 6.0-7.3.</text>
    </phDependence>
</comment>
<comment type="similarity">
    <text evidence="4">Belongs to the UDP-glycosyltransferase family.</text>
</comment>
<reference key="1">
    <citation type="journal article" date="2002" name="Plant Physiol.">
        <title>Cloning and characterization of the abscisic acid-specific glucosyltransferase gene from adzuki bean seedlings.</title>
        <authorList>
            <person name="Xu Z.J."/>
            <person name="Nakajima M."/>
            <person name="Suzuki Y."/>
            <person name="Yamaguchi I."/>
        </authorList>
    </citation>
    <scope>NUCLEOTIDE SEQUENCE [MRNA]</scope>
    <scope>FUNCTION</scope>
    <scope>CATALYTIC ACTIVITY</scope>
    <scope>INDUCTION BY ABSCISIC ACID; DROUGHT AND WOUNDING</scope>
    <scope>BIOPHYSICOCHEMICAL PROPERTIES</scope>
    <source>
        <tissue>Hypocotyl</tissue>
    </source>
</reference>
<sequence>MKTLTPSVEIFFFPYVGGGHQIPMIDAARMFASHGASSTILATPSTTPLFQKCITRDQKFGLPISIHTLSADVPQSDISVGPFLDTSALLEPLRQLLLQRRPHCIVVDMFHRWSGDVVYELGIPRTLFNGIGCFALCVQENLRHVAFKSVSTDSEPFLVPNIPDRIEMTMSQLPPFLRNPSGIPERWRGMKQLEEKSFGTLINSFYDLEPAYADLIKSKWGNKAWIVGPVSFCNRSKEDKTERGKPPTIDEQNCLNWLNSKKPSSVLYASFGSLARLPPEQLKEIAYGLEASEQSFIWVVGNILHNPSENKENGSGNWLPEGFEQRMKETGKGLVLRGWAPQLLILEHAAIKGFMTHCGWNSTLEGVSAGVPMITWPLTAEQFSNEKLITEVLKTGVQVGNREWWPWNAEWKGLVGREKVEVAVRKLMVESVEADEMRRRAKDIAGKAARAVEEGGTSYADVEALIQELQARTCANQG</sequence>
<protein>
    <recommendedName>
        <fullName>Abscisate beta-glucosyltransferase</fullName>
        <ecNumber>2.4.1.263</ecNumber>
    </recommendedName>
    <alternativeName>
        <fullName>ABA-glucosyltransferase</fullName>
    </alternativeName>
</protein>
<feature type="chain" id="PRO_0000412903" description="Abscisate beta-glucosyltransferase">
    <location>
        <begin position="1"/>
        <end position="478"/>
    </location>
</feature>
<feature type="active site" description="Proton acceptor" evidence="1">
    <location>
        <position position="20"/>
    </location>
</feature>
<feature type="active site" description="Charge relay" evidence="1">
    <location>
        <position position="108"/>
    </location>
</feature>
<feature type="binding site" evidence="2">
    <location>
        <position position="20"/>
    </location>
    <ligand>
        <name>an anthocyanidin</name>
        <dbReference type="ChEBI" id="CHEBI:143576"/>
    </ligand>
</feature>
<feature type="binding site" evidence="1">
    <location>
        <position position="340"/>
    </location>
    <ligand>
        <name>UDP-alpha-D-glucose</name>
        <dbReference type="ChEBI" id="CHEBI:58885"/>
    </ligand>
</feature>
<feature type="binding site" evidence="1">
    <location>
        <position position="342"/>
    </location>
    <ligand>
        <name>UDP-alpha-D-glucose</name>
        <dbReference type="ChEBI" id="CHEBI:58885"/>
    </ligand>
</feature>
<feature type="binding site" evidence="1">
    <location>
        <position position="357"/>
    </location>
    <ligand>
        <name>UDP-alpha-D-glucose</name>
        <dbReference type="ChEBI" id="CHEBI:58885"/>
    </ligand>
</feature>
<feature type="binding site" evidence="1">
    <location>
        <position position="360"/>
    </location>
    <ligand>
        <name>UDP-alpha-D-glucose</name>
        <dbReference type="ChEBI" id="CHEBI:58885"/>
    </ligand>
</feature>
<feature type="binding site" evidence="1">
    <location>
        <position position="361"/>
    </location>
    <ligand>
        <name>UDP-alpha-D-glucose</name>
        <dbReference type="ChEBI" id="CHEBI:58885"/>
    </ligand>
</feature>
<feature type="binding site" evidence="1">
    <location>
        <position position="362"/>
    </location>
    <ligand>
        <name>UDP-alpha-D-glucose</name>
        <dbReference type="ChEBI" id="CHEBI:58885"/>
    </ligand>
</feature>
<feature type="binding site" evidence="1">
    <location>
        <position position="365"/>
    </location>
    <ligand>
        <name>UDP-alpha-D-glucose</name>
        <dbReference type="ChEBI" id="CHEBI:58885"/>
    </ligand>
</feature>
<feature type="binding site" evidence="2">
    <location>
        <position position="380"/>
    </location>
    <ligand>
        <name>an anthocyanidin</name>
        <dbReference type="ChEBI" id="CHEBI:143576"/>
    </ligand>
</feature>
<feature type="binding site" evidence="1">
    <location>
        <position position="381"/>
    </location>
    <ligand>
        <name>UDP-alpha-D-glucose</name>
        <dbReference type="ChEBI" id="CHEBI:58885"/>
    </ligand>
</feature>
<feature type="binding site" evidence="1">
    <location>
        <position position="382"/>
    </location>
    <ligand>
        <name>UDP-alpha-D-glucose</name>
        <dbReference type="ChEBI" id="CHEBI:58885"/>
    </ligand>
</feature>